<gene>
    <name evidence="1" type="primary">rplB</name>
    <name type="ordered locus">XOO3384</name>
</gene>
<protein>
    <recommendedName>
        <fullName evidence="1">Large ribosomal subunit protein uL2</fullName>
    </recommendedName>
    <alternativeName>
        <fullName evidence="3">50S ribosomal protein L2</fullName>
    </alternativeName>
</protein>
<feature type="chain" id="PRO_0000237270" description="Large ribosomal subunit protein uL2">
    <location>
        <begin position="1"/>
        <end position="275"/>
    </location>
</feature>
<feature type="region of interest" description="Disordered" evidence="2">
    <location>
        <begin position="224"/>
        <end position="275"/>
    </location>
</feature>
<reference key="1">
    <citation type="journal article" date="2005" name="Jpn. Agric. Res. Q.">
        <title>Genome sequence of Xanthomonas oryzae pv. oryzae suggests contribution of large numbers of effector genes and insertion sequences to its race diversity.</title>
        <authorList>
            <person name="Ochiai H."/>
            <person name="Inoue Y."/>
            <person name="Takeya M."/>
            <person name="Sasaki A."/>
            <person name="Kaku H."/>
        </authorList>
    </citation>
    <scope>NUCLEOTIDE SEQUENCE [LARGE SCALE GENOMIC DNA]</scope>
    <source>
        <strain>MAFF 311018</strain>
    </source>
</reference>
<name>RL2_XANOM</name>
<accession>Q2NZY8</accession>
<sequence length="275" mass="29845">MPLMKFKPTSPGRRSAVRVVTPDLHKGAPHAALLDSQSKSGGRNHHGRITVRHVGGGHKQHYRIIDFKRNKEGIPARVERIEYDPNRTAHIALLCYVDGERCYIIAPKGLKAGDQVIAGANAPIKTGNTLPLRNIPVGTTVHGIELKPGKGAQIARAAGAAVQLVAREGIYATLRLRSGEMRKVPVECRATIGEVGNDEHNLEKLGKAGAKRWRGVRPTVRGAAMNPVDHPHGGGEAKAGQGNPHPVTPWGVPTKGYKTRKNKRTQQFIVRDRRG</sequence>
<evidence type="ECO:0000255" key="1">
    <source>
        <dbReference type="HAMAP-Rule" id="MF_01320"/>
    </source>
</evidence>
<evidence type="ECO:0000256" key="2">
    <source>
        <dbReference type="SAM" id="MobiDB-lite"/>
    </source>
</evidence>
<evidence type="ECO:0000305" key="3"/>
<organism>
    <name type="scientific">Xanthomonas oryzae pv. oryzae (strain MAFF 311018)</name>
    <dbReference type="NCBI Taxonomy" id="342109"/>
    <lineage>
        <taxon>Bacteria</taxon>
        <taxon>Pseudomonadati</taxon>
        <taxon>Pseudomonadota</taxon>
        <taxon>Gammaproteobacteria</taxon>
        <taxon>Lysobacterales</taxon>
        <taxon>Lysobacteraceae</taxon>
        <taxon>Xanthomonas</taxon>
    </lineage>
</organism>
<dbReference type="EMBL" id="AP008229">
    <property type="protein sequence ID" value="BAE70139.1"/>
    <property type="molecule type" value="Genomic_DNA"/>
</dbReference>
<dbReference type="RefSeq" id="WP_011260027.1">
    <property type="nucleotide sequence ID" value="NC_007705.1"/>
</dbReference>
<dbReference type="SMR" id="Q2NZY8"/>
<dbReference type="KEGG" id="xom:XOO3384"/>
<dbReference type="HOGENOM" id="CLU_036235_2_1_6"/>
<dbReference type="GO" id="GO:0015934">
    <property type="term" value="C:large ribosomal subunit"/>
    <property type="evidence" value="ECO:0007669"/>
    <property type="project" value="InterPro"/>
</dbReference>
<dbReference type="GO" id="GO:0019843">
    <property type="term" value="F:rRNA binding"/>
    <property type="evidence" value="ECO:0007669"/>
    <property type="project" value="UniProtKB-UniRule"/>
</dbReference>
<dbReference type="GO" id="GO:0003735">
    <property type="term" value="F:structural constituent of ribosome"/>
    <property type="evidence" value="ECO:0007669"/>
    <property type="project" value="InterPro"/>
</dbReference>
<dbReference type="GO" id="GO:0016740">
    <property type="term" value="F:transferase activity"/>
    <property type="evidence" value="ECO:0007669"/>
    <property type="project" value="InterPro"/>
</dbReference>
<dbReference type="GO" id="GO:0002181">
    <property type="term" value="P:cytoplasmic translation"/>
    <property type="evidence" value="ECO:0007669"/>
    <property type="project" value="TreeGrafter"/>
</dbReference>
<dbReference type="FunFam" id="2.30.30.30:FF:000001">
    <property type="entry name" value="50S ribosomal protein L2"/>
    <property type="match status" value="1"/>
</dbReference>
<dbReference type="FunFam" id="2.40.50.140:FF:000003">
    <property type="entry name" value="50S ribosomal protein L2"/>
    <property type="match status" value="1"/>
</dbReference>
<dbReference type="FunFam" id="4.10.950.10:FF:000001">
    <property type="entry name" value="50S ribosomal protein L2"/>
    <property type="match status" value="1"/>
</dbReference>
<dbReference type="Gene3D" id="2.30.30.30">
    <property type="match status" value="1"/>
</dbReference>
<dbReference type="Gene3D" id="2.40.50.140">
    <property type="entry name" value="Nucleic acid-binding proteins"/>
    <property type="match status" value="1"/>
</dbReference>
<dbReference type="Gene3D" id="4.10.950.10">
    <property type="entry name" value="Ribosomal protein L2, domain 3"/>
    <property type="match status" value="1"/>
</dbReference>
<dbReference type="HAMAP" id="MF_01320_B">
    <property type="entry name" value="Ribosomal_uL2_B"/>
    <property type="match status" value="1"/>
</dbReference>
<dbReference type="InterPro" id="IPR012340">
    <property type="entry name" value="NA-bd_OB-fold"/>
</dbReference>
<dbReference type="InterPro" id="IPR014722">
    <property type="entry name" value="Rib_uL2_dom2"/>
</dbReference>
<dbReference type="InterPro" id="IPR002171">
    <property type="entry name" value="Ribosomal_uL2"/>
</dbReference>
<dbReference type="InterPro" id="IPR005880">
    <property type="entry name" value="Ribosomal_uL2_bac/org-type"/>
</dbReference>
<dbReference type="InterPro" id="IPR022669">
    <property type="entry name" value="Ribosomal_uL2_C"/>
</dbReference>
<dbReference type="InterPro" id="IPR022671">
    <property type="entry name" value="Ribosomal_uL2_CS"/>
</dbReference>
<dbReference type="InterPro" id="IPR014726">
    <property type="entry name" value="Ribosomal_uL2_dom3"/>
</dbReference>
<dbReference type="InterPro" id="IPR022666">
    <property type="entry name" value="Ribosomal_uL2_RNA-bd_dom"/>
</dbReference>
<dbReference type="InterPro" id="IPR008991">
    <property type="entry name" value="Translation_prot_SH3-like_sf"/>
</dbReference>
<dbReference type="NCBIfam" id="TIGR01171">
    <property type="entry name" value="rplB_bact"/>
    <property type="match status" value="1"/>
</dbReference>
<dbReference type="PANTHER" id="PTHR13691:SF5">
    <property type="entry name" value="LARGE RIBOSOMAL SUBUNIT PROTEIN UL2M"/>
    <property type="match status" value="1"/>
</dbReference>
<dbReference type="PANTHER" id="PTHR13691">
    <property type="entry name" value="RIBOSOMAL PROTEIN L2"/>
    <property type="match status" value="1"/>
</dbReference>
<dbReference type="Pfam" id="PF00181">
    <property type="entry name" value="Ribosomal_L2"/>
    <property type="match status" value="1"/>
</dbReference>
<dbReference type="Pfam" id="PF03947">
    <property type="entry name" value="Ribosomal_L2_C"/>
    <property type="match status" value="1"/>
</dbReference>
<dbReference type="PIRSF" id="PIRSF002158">
    <property type="entry name" value="Ribosomal_L2"/>
    <property type="match status" value="1"/>
</dbReference>
<dbReference type="SMART" id="SM01383">
    <property type="entry name" value="Ribosomal_L2"/>
    <property type="match status" value="1"/>
</dbReference>
<dbReference type="SMART" id="SM01382">
    <property type="entry name" value="Ribosomal_L2_C"/>
    <property type="match status" value="1"/>
</dbReference>
<dbReference type="SUPFAM" id="SSF50249">
    <property type="entry name" value="Nucleic acid-binding proteins"/>
    <property type="match status" value="1"/>
</dbReference>
<dbReference type="SUPFAM" id="SSF50104">
    <property type="entry name" value="Translation proteins SH3-like domain"/>
    <property type="match status" value="1"/>
</dbReference>
<dbReference type="PROSITE" id="PS00467">
    <property type="entry name" value="RIBOSOMAL_L2"/>
    <property type="match status" value="1"/>
</dbReference>
<comment type="function">
    <text evidence="1">One of the primary rRNA binding proteins. Required for association of the 30S and 50S subunits to form the 70S ribosome, for tRNA binding and peptide bond formation. It has been suggested to have peptidyltransferase activity; this is somewhat controversial. Makes several contacts with the 16S rRNA in the 70S ribosome.</text>
</comment>
<comment type="subunit">
    <text evidence="1">Part of the 50S ribosomal subunit. Forms a bridge to the 30S subunit in the 70S ribosome.</text>
</comment>
<comment type="similarity">
    <text evidence="1">Belongs to the universal ribosomal protein uL2 family.</text>
</comment>
<proteinExistence type="inferred from homology"/>
<keyword id="KW-0687">Ribonucleoprotein</keyword>
<keyword id="KW-0689">Ribosomal protein</keyword>
<keyword id="KW-0694">RNA-binding</keyword>
<keyword id="KW-0699">rRNA-binding</keyword>